<feature type="initiator methionine" description="Removed" evidence="1">
    <location>
        <position position="1"/>
    </location>
</feature>
<feature type="chain" id="PRO_0000071916" description="Histone H2B.2">
    <location>
        <begin position="2"/>
        <end position="150"/>
    </location>
</feature>
<feature type="region of interest" description="Disordered" evidence="2">
    <location>
        <begin position="1"/>
        <end position="57"/>
    </location>
</feature>
<feature type="compositionally biased region" description="Basic and acidic residues" evidence="2">
    <location>
        <begin position="1"/>
        <end position="16"/>
    </location>
</feature>
<feature type="modified residue" description="N6-acetyllysine" evidence="1">
    <location>
        <position position="7"/>
    </location>
</feature>
<feature type="modified residue" description="N6-acetyllysine" evidence="1">
    <location>
        <position position="34"/>
    </location>
</feature>
<feature type="cross-link" description="Glycyl lysine isopeptide (Lys-Gly) (interchain with G-Cter in ubiquitin)" evidence="1">
    <location>
        <position position="146"/>
    </location>
</feature>
<comment type="function">
    <text>Core component of nucleosome. Nucleosomes wrap and compact DNA into chromatin, limiting DNA accessibility to the cellular machineries which require DNA as a template. Histones thereby play a central role in transcription regulation, DNA repair, DNA replication and chromosomal stability. DNA accessibility is regulated via a complex set of post-translational modifications of histones, also called histone code, and nucleosome remodeling.</text>
</comment>
<comment type="subunit">
    <text>The nucleosome is a histone octamer containing two molecules each of H2A, H2B, H3 and H4 assembled in one H3-H4 heterotetramer and two H2A-H2B heterodimers. The octamer wraps approximately 147 bp of DNA.</text>
</comment>
<comment type="subcellular location">
    <subcellularLocation>
        <location>Nucleus</location>
    </subcellularLocation>
    <subcellularLocation>
        <location>Chromosome</location>
    </subcellularLocation>
</comment>
<comment type="PTM">
    <text evidence="1">Can be acetylated to form H2BK6ac and H2BK33ac.</text>
</comment>
<comment type="PTM">
    <text evidence="1">Monoubiquitinated to form H2BK143ub1; may give a specific tag for epigenetic transcriptional activation.</text>
</comment>
<comment type="similarity">
    <text evidence="3">Belongs to the histone H2B family.</text>
</comment>
<comment type="caution">
    <text evidence="3">To ensure consistency between histone entries, we follow the 'Brno' nomenclature for histone modifications, with positions referring to those used in the literature for the 'closest' model organism. Due to slight variations in histone sequences between organisms and to the presence of initiator methionine in UniProtKB/Swiss-Prot sequences, the actual positions of modified amino acids in the sequence generally differ. In this entry the following conventions are used: H2BK6ac = acetylated Lys-7; H2BK33ac = acetylated Lys-34; H2BK143ub1 = monoubiquitinated Lys-146.</text>
</comment>
<sequence>MAPKAEKKPAAKKPAEEEPAAEKAPAGKKPKAEKRVPAGKSAGKEGGEGKRGRKKGKKSVETYKIYIFKVLKQVHPDIGISSKAMSIMNSFINDIFEKLAAEAAKLARYNKKPTITSREIQTSVRLVLPGELAKHAVSEGTKAVTKFTSS</sequence>
<protein>
    <recommendedName>
        <fullName>Histone H2B.2</fullName>
    </recommendedName>
</protein>
<name>H2B2_MAIZE</name>
<keyword id="KW-0007">Acetylation</keyword>
<keyword id="KW-0158">Chromosome</keyword>
<keyword id="KW-0238">DNA-binding</keyword>
<keyword id="KW-1017">Isopeptide bond</keyword>
<keyword id="KW-0544">Nucleosome core</keyword>
<keyword id="KW-0539">Nucleus</keyword>
<keyword id="KW-1185">Reference proteome</keyword>
<keyword id="KW-0832">Ubl conjugation</keyword>
<organism>
    <name type="scientific">Zea mays</name>
    <name type="common">Maize</name>
    <dbReference type="NCBI Taxonomy" id="4577"/>
    <lineage>
        <taxon>Eukaryota</taxon>
        <taxon>Viridiplantae</taxon>
        <taxon>Streptophyta</taxon>
        <taxon>Embryophyta</taxon>
        <taxon>Tracheophyta</taxon>
        <taxon>Spermatophyta</taxon>
        <taxon>Magnoliopsida</taxon>
        <taxon>Liliopsida</taxon>
        <taxon>Poales</taxon>
        <taxon>Poaceae</taxon>
        <taxon>PACMAD clade</taxon>
        <taxon>Panicoideae</taxon>
        <taxon>Andropogonodae</taxon>
        <taxon>Andropogoneae</taxon>
        <taxon>Tripsacinae</taxon>
        <taxon>Zea</taxon>
    </lineage>
</organism>
<dbReference type="EMBL" id="X57313">
    <property type="protein sequence ID" value="CAA40565.1"/>
    <property type="molecule type" value="mRNA"/>
</dbReference>
<dbReference type="PIR" id="S28049">
    <property type="entry name" value="S28049"/>
</dbReference>
<dbReference type="RefSeq" id="NP_001131654.1">
    <property type="nucleotide sequence ID" value="NM_001138182.1"/>
</dbReference>
<dbReference type="SMR" id="P30756"/>
<dbReference type="STRING" id="4577.P30756"/>
<dbReference type="PaxDb" id="4577-GRMZM2G119071_P01"/>
<dbReference type="EnsemblPlants" id="Zm00001eb177270_T001">
    <property type="protein sequence ID" value="Zm00001eb177270_P001"/>
    <property type="gene ID" value="Zm00001eb177270"/>
</dbReference>
<dbReference type="GeneID" id="100193014"/>
<dbReference type="Gramene" id="Zm00001eb177270_T001">
    <property type="protein sequence ID" value="Zm00001eb177270_P001"/>
    <property type="gene ID" value="Zm00001eb177270"/>
</dbReference>
<dbReference type="KEGG" id="zma:100193014"/>
<dbReference type="MaizeGDB" id="65109"/>
<dbReference type="eggNOG" id="KOG1744">
    <property type="taxonomic scope" value="Eukaryota"/>
</dbReference>
<dbReference type="HOGENOM" id="CLU_075666_1_0_1"/>
<dbReference type="InParanoid" id="P30756"/>
<dbReference type="OMA" id="NIYIYRV"/>
<dbReference type="OrthoDB" id="1914959at2759"/>
<dbReference type="Proteomes" id="UP000007305">
    <property type="component" value="Chromosome 4"/>
</dbReference>
<dbReference type="ExpressionAtlas" id="P30756">
    <property type="expression patterns" value="baseline and differential"/>
</dbReference>
<dbReference type="GO" id="GO:0000786">
    <property type="term" value="C:nucleosome"/>
    <property type="evidence" value="ECO:0007669"/>
    <property type="project" value="UniProtKB-KW"/>
</dbReference>
<dbReference type="GO" id="GO:0005634">
    <property type="term" value="C:nucleus"/>
    <property type="evidence" value="ECO:0007669"/>
    <property type="project" value="UniProtKB-SubCell"/>
</dbReference>
<dbReference type="GO" id="GO:0003677">
    <property type="term" value="F:DNA binding"/>
    <property type="evidence" value="ECO:0000318"/>
    <property type="project" value="GO_Central"/>
</dbReference>
<dbReference type="GO" id="GO:0046982">
    <property type="term" value="F:protein heterodimerization activity"/>
    <property type="evidence" value="ECO:0007669"/>
    <property type="project" value="InterPro"/>
</dbReference>
<dbReference type="GO" id="GO:0030527">
    <property type="term" value="F:structural constituent of chromatin"/>
    <property type="evidence" value="ECO:0007669"/>
    <property type="project" value="InterPro"/>
</dbReference>
<dbReference type="CDD" id="cd22910">
    <property type="entry name" value="HFD_H2B"/>
    <property type="match status" value="1"/>
</dbReference>
<dbReference type="FunFam" id="1.10.20.10:FF:000014">
    <property type="entry name" value="Histone H2B"/>
    <property type="match status" value="1"/>
</dbReference>
<dbReference type="Gene3D" id="1.10.20.10">
    <property type="entry name" value="Histone, subunit A"/>
    <property type="match status" value="1"/>
</dbReference>
<dbReference type="InterPro" id="IPR009072">
    <property type="entry name" value="Histone-fold"/>
</dbReference>
<dbReference type="InterPro" id="IPR007125">
    <property type="entry name" value="Histone_H2A/H2B/H3"/>
</dbReference>
<dbReference type="InterPro" id="IPR000558">
    <property type="entry name" value="Histone_H2B"/>
</dbReference>
<dbReference type="InterPro" id="IPR055333">
    <property type="entry name" value="HISTONE_H2B_site"/>
</dbReference>
<dbReference type="PANTHER" id="PTHR23428">
    <property type="entry name" value="HISTONE H2B"/>
    <property type="match status" value="1"/>
</dbReference>
<dbReference type="Pfam" id="PF00125">
    <property type="entry name" value="Histone"/>
    <property type="match status" value="1"/>
</dbReference>
<dbReference type="PRINTS" id="PR00621">
    <property type="entry name" value="HISTONEH2B"/>
</dbReference>
<dbReference type="SMART" id="SM00427">
    <property type="entry name" value="H2B"/>
    <property type="match status" value="1"/>
</dbReference>
<dbReference type="SUPFAM" id="SSF47113">
    <property type="entry name" value="Histone-fold"/>
    <property type="match status" value="1"/>
</dbReference>
<dbReference type="PROSITE" id="PS00357">
    <property type="entry name" value="HISTONE_H2B"/>
    <property type="match status" value="1"/>
</dbReference>
<evidence type="ECO:0000250" key="1"/>
<evidence type="ECO:0000256" key="2">
    <source>
        <dbReference type="SAM" id="MobiDB-lite"/>
    </source>
</evidence>
<evidence type="ECO:0000305" key="3"/>
<reference key="1">
    <citation type="journal article" date="1992" name="Plant Mol. Biol.">
        <title>Nucleotide sequence and expression of two cDNA coding for two histone H2B variants of maize.</title>
        <authorList>
            <person name="Joanin P."/>
            <person name="Gigot C."/>
            <person name="Phillipps G."/>
        </authorList>
    </citation>
    <scope>NUCLEOTIDE SEQUENCE [MRNA]</scope>
    <source>
        <strain>cv. Wisconsin 22</strain>
    </source>
</reference>
<accession>P30756</accession>
<proteinExistence type="evidence at transcript level"/>